<evidence type="ECO:0000255" key="1">
    <source>
        <dbReference type="PROSITE-ProRule" id="PRU00088"/>
    </source>
</evidence>
<evidence type="ECO:0000269" key="2">
    <source>
    </source>
</evidence>
<evidence type="ECO:0000269" key="3">
    <source>
    </source>
</evidence>
<evidence type="ECO:0000303" key="4">
    <source>
    </source>
</evidence>
<evidence type="ECO:0000305" key="5"/>
<evidence type="ECO:0007744" key="6">
    <source>
        <dbReference type="PDB" id="2M6R"/>
    </source>
</evidence>
<evidence type="ECO:0007744" key="7">
    <source>
        <dbReference type="PDB" id="2M6S"/>
    </source>
</evidence>
<evidence type="ECO:0007829" key="8">
    <source>
        <dbReference type="PDB" id="2M6R"/>
    </source>
</evidence>
<evidence type="ECO:0007829" key="9">
    <source>
        <dbReference type="PDB" id="2M6S"/>
    </source>
</evidence>
<dbReference type="EMBL" id="U29581">
    <property type="protein sequence ID" value="AAB40440.1"/>
    <property type="molecule type" value="Genomic_DNA"/>
</dbReference>
<dbReference type="EMBL" id="U00096">
    <property type="protein sequence ID" value="AAC75832.1"/>
    <property type="molecule type" value="Genomic_DNA"/>
</dbReference>
<dbReference type="EMBL" id="AP009048">
    <property type="protein sequence ID" value="BAE76862.1"/>
    <property type="molecule type" value="Genomic_DNA"/>
</dbReference>
<dbReference type="PIR" id="B65061">
    <property type="entry name" value="B65061"/>
</dbReference>
<dbReference type="RefSeq" id="NP_417270.1">
    <property type="nucleotide sequence ID" value="NC_000913.3"/>
</dbReference>
<dbReference type="RefSeq" id="WP_000807753.1">
    <property type="nucleotide sequence ID" value="NZ_LN832404.1"/>
</dbReference>
<dbReference type="PDB" id="2M6R">
    <property type="method" value="NMR"/>
    <property type="chains" value="A=1-149"/>
</dbReference>
<dbReference type="PDB" id="2M6S">
    <property type="method" value="NMR"/>
    <property type="chains" value="A=1-149"/>
</dbReference>
<dbReference type="PDBsum" id="2M6R"/>
<dbReference type="PDBsum" id="2M6S"/>
<dbReference type="BMRB" id="P65367"/>
<dbReference type="SMR" id="P65367"/>
<dbReference type="BioGRID" id="4261741">
    <property type="interactions" value="32"/>
</dbReference>
<dbReference type="DIP" id="DIP-48153N"/>
<dbReference type="FunCoup" id="P65367">
    <property type="interactions" value="13"/>
</dbReference>
<dbReference type="IntAct" id="P65367">
    <property type="interactions" value="6"/>
</dbReference>
<dbReference type="STRING" id="511145.b2790"/>
<dbReference type="jPOST" id="P65367"/>
<dbReference type="PaxDb" id="511145-b2790"/>
<dbReference type="EnsemblBacteria" id="AAC75832">
    <property type="protein sequence ID" value="AAC75832"/>
    <property type="gene ID" value="b2790"/>
</dbReference>
<dbReference type="GeneID" id="947151"/>
<dbReference type="KEGG" id="ecj:JW2761"/>
<dbReference type="KEGG" id="eco:b2790"/>
<dbReference type="KEGG" id="ecoc:C3026_15340"/>
<dbReference type="PATRIC" id="fig|1411691.4.peg.3943"/>
<dbReference type="EchoBASE" id="EB2962"/>
<dbReference type="eggNOG" id="COG0716">
    <property type="taxonomic scope" value="Bacteria"/>
</dbReference>
<dbReference type="HOGENOM" id="CLU_051402_4_1_6"/>
<dbReference type="InParanoid" id="P65367"/>
<dbReference type="OMA" id="SYDHFCG"/>
<dbReference type="OrthoDB" id="359268at2"/>
<dbReference type="PhylomeDB" id="P65367"/>
<dbReference type="BioCyc" id="EcoCyc:G7448-MONOMER"/>
<dbReference type="EvolutionaryTrace" id="P65367"/>
<dbReference type="PRO" id="PR:P65367"/>
<dbReference type="Proteomes" id="UP000000625">
    <property type="component" value="Chromosome"/>
</dbReference>
<dbReference type="GO" id="GO:0010181">
    <property type="term" value="F:FMN binding"/>
    <property type="evidence" value="ECO:0000314"/>
    <property type="project" value="EcoCyc"/>
</dbReference>
<dbReference type="FunFam" id="3.40.50.360:FF:000020">
    <property type="entry name" value="Flavodoxin_1, Flavodoxin"/>
    <property type="match status" value="1"/>
</dbReference>
<dbReference type="Gene3D" id="3.40.50.360">
    <property type="match status" value="1"/>
</dbReference>
<dbReference type="InterPro" id="IPR001094">
    <property type="entry name" value="Flavdoxin-like"/>
</dbReference>
<dbReference type="InterPro" id="IPR008254">
    <property type="entry name" value="Flavodoxin/NO_synth"/>
</dbReference>
<dbReference type="InterPro" id="IPR029039">
    <property type="entry name" value="Flavoprotein-like_sf"/>
</dbReference>
<dbReference type="NCBIfam" id="NF005989">
    <property type="entry name" value="PRK08105.1"/>
    <property type="match status" value="1"/>
</dbReference>
<dbReference type="PANTHER" id="PTHR19384">
    <property type="entry name" value="NITRIC OXIDE SYNTHASE-RELATED"/>
    <property type="match status" value="1"/>
</dbReference>
<dbReference type="Pfam" id="PF00258">
    <property type="entry name" value="Flavodoxin_1"/>
    <property type="match status" value="1"/>
</dbReference>
<dbReference type="PRINTS" id="PR00369">
    <property type="entry name" value="FLAVODOXIN"/>
</dbReference>
<dbReference type="SUPFAM" id="SSF52218">
    <property type="entry name" value="Flavoproteins"/>
    <property type="match status" value="1"/>
</dbReference>
<dbReference type="PROSITE" id="PS50902">
    <property type="entry name" value="FLAVODOXIN_LIKE"/>
    <property type="match status" value="1"/>
</dbReference>
<proteinExistence type="evidence at protein level"/>
<protein>
    <recommendedName>
        <fullName evidence="4">Flavodoxin YqcA</fullName>
    </recommendedName>
</protein>
<gene>
    <name type="primary">yqcA</name>
    <name type="ordered locus">b2790</name>
    <name type="ordered locus">JW2761</name>
</gene>
<name>YQCA_ECOLI</name>
<feature type="chain" id="PRO_0000196577" description="Flavodoxin YqcA">
    <location>
        <begin position="1"/>
        <end position="149"/>
    </location>
</feature>
<feature type="domain" description="Flavodoxin-like" evidence="1">
    <location>
        <begin position="4"/>
        <end position="145"/>
    </location>
</feature>
<feature type="binding site" evidence="7">
    <location>
        <begin position="10"/>
        <end position="15"/>
    </location>
    <ligand>
        <name>FMN</name>
        <dbReference type="ChEBI" id="CHEBI:58210"/>
    </ligand>
</feature>
<feature type="binding site" evidence="7">
    <location>
        <begin position="99"/>
        <end position="101"/>
    </location>
    <ligand>
        <name>FMN</name>
        <dbReference type="ChEBI" id="CHEBI:58210"/>
    </ligand>
</feature>
<feature type="strand" evidence="8">
    <location>
        <begin position="3"/>
        <end position="9"/>
    </location>
</feature>
<feature type="strand" evidence="9">
    <location>
        <begin position="11"/>
        <end position="13"/>
    </location>
</feature>
<feature type="helix" evidence="8">
    <location>
        <begin position="18"/>
        <end position="29"/>
    </location>
</feature>
<feature type="strand" evidence="8">
    <location>
        <begin position="32"/>
        <end position="38"/>
    </location>
</feature>
<feature type="helix" evidence="8">
    <location>
        <begin position="41"/>
        <end position="44"/>
    </location>
</feature>
<feature type="helix" evidence="8">
    <location>
        <begin position="45"/>
        <end position="47"/>
    </location>
</feature>
<feature type="strand" evidence="8">
    <location>
        <begin position="50"/>
        <end position="56"/>
    </location>
</feature>
<feature type="turn" evidence="8">
    <location>
        <begin position="60"/>
        <end position="62"/>
    </location>
</feature>
<feature type="turn" evidence="8">
    <location>
        <begin position="66"/>
        <end position="68"/>
    </location>
</feature>
<feature type="helix" evidence="8">
    <location>
        <begin position="69"/>
        <end position="78"/>
    </location>
</feature>
<feature type="strand" evidence="8">
    <location>
        <begin position="86"/>
        <end position="93"/>
    </location>
</feature>
<feature type="turn" evidence="8">
    <location>
        <begin position="98"/>
        <end position="101"/>
    </location>
</feature>
<feature type="helix" evidence="8">
    <location>
        <begin position="102"/>
        <end position="114"/>
    </location>
</feature>
<feature type="strand" evidence="8">
    <location>
        <begin position="123"/>
        <end position="126"/>
    </location>
</feature>
<feature type="turn" evidence="8">
    <location>
        <begin position="127"/>
        <end position="129"/>
    </location>
</feature>
<feature type="helix" evidence="8">
    <location>
        <begin position="134"/>
        <end position="144"/>
    </location>
</feature>
<feature type="helix" evidence="8">
    <location>
        <begin position="145"/>
        <end position="147"/>
    </location>
</feature>
<keyword id="KW-0002">3D-structure</keyword>
<keyword id="KW-0249">Electron transport</keyword>
<keyword id="KW-0285">Flavoprotein</keyword>
<keyword id="KW-0288">FMN</keyword>
<keyword id="KW-0547">Nucleotide-binding</keyword>
<keyword id="KW-1185">Reference proteome</keyword>
<keyword id="KW-0813">Transport</keyword>
<reference key="1">
    <citation type="journal article" date="1997" name="Science">
        <title>The complete genome sequence of Escherichia coli K-12.</title>
        <authorList>
            <person name="Blattner F.R."/>
            <person name="Plunkett G. III"/>
            <person name="Bloch C.A."/>
            <person name="Perna N.T."/>
            <person name="Burland V."/>
            <person name="Riley M."/>
            <person name="Collado-Vides J."/>
            <person name="Glasner J.D."/>
            <person name="Rode C.K."/>
            <person name="Mayhew G.F."/>
            <person name="Gregor J."/>
            <person name="Davis N.W."/>
            <person name="Kirkpatrick H.A."/>
            <person name="Goeden M.A."/>
            <person name="Rose D.J."/>
            <person name="Mau B."/>
            <person name="Shao Y."/>
        </authorList>
    </citation>
    <scope>NUCLEOTIDE SEQUENCE [LARGE SCALE GENOMIC DNA]</scope>
    <source>
        <strain>K12 / MG1655 / ATCC 47076</strain>
    </source>
</reference>
<reference key="2">
    <citation type="journal article" date="2006" name="Mol. Syst. Biol.">
        <title>Highly accurate genome sequences of Escherichia coli K-12 strains MG1655 and W3110.</title>
        <authorList>
            <person name="Hayashi K."/>
            <person name="Morooka N."/>
            <person name="Yamamoto Y."/>
            <person name="Fujita K."/>
            <person name="Isono K."/>
            <person name="Choi S."/>
            <person name="Ohtsubo E."/>
            <person name="Baba T."/>
            <person name="Wanner B.L."/>
            <person name="Mori H."/>
            <person name="Horiuchi T."/>
        </authorList>
    </citation>
    <scope>NUCLEOTIDE SEQUENCE [LARGE SCALE GENOMIC DNA]</scope>
    <source>
        <strain>K12 / W3110 / ATCC 27325 / DSM 5911</strain>
    </source>
</reference>
<reference key="3">
    <citation type="journal article" date="2014" name="Biomol. NMR. Assign.">
        <title>1H, 13C and 15N resonance assignments of the apo and holo states of flavodoxin YqcA from Escherichia coli.</title>
        <authorList>
            <person name="Ye Q."/>
            <person name="Hu Y."/>
            <person name="Jin C."/>
        </authorList>
    </citation>
    <scope>COFACTOR</scope>
    <scope>NMR STUDIES</scope>
</reference>
<reference evidence="6 7" key="4">
    <citation type="journal article" date="2014" name="PLoS ONE">
        <title>Conformational dynamics of Escherichia coli flavodoxins in apo- and holo-states by solution NMR spectroscopy.</title>
        <authorList>
            <person name="Ye Q."/>
            <person name="Hu Y."/>
            <person name="Jin C."/>
        </authorList>
    </citation>
    <scope>STRUCTURE BY NMR IN COMPLEX WITH AND WITHOUT FMN</scope>
    <scope>COFACTOR</scope>
    <scope>SUBUNIT</scope>
    <scope>DOMAIN</scope>
</reference>
<organism>
    <name type="scientific">Escherichia coli (strain K12)</name>
    <dbReference type="NCBI Taxonomy" id="83333"/>
    <lineage>
        <taxon>Bacteria</taxon>
        <taxon>Pseudomonadati</taxon>
        <taxon>Pseudomonadota</taxon>
        <taxon>Gammaproteobacteria</taxon>
        <taxon>Enterobacterales</taxon>
        <taxon>Enterobacteriaceae</taxon>
        <taxon>Escherichia</taxon>
    </lineage>
</organism>
<accession>P65367</accession>
<accession>Q2MA44</accession>
<accession>Q46917</accession>
<comment type="function">
    <text>Probable electron transporter.</text>
</comment>
<comment type="cofactor">
    <cofactor evidence="2 3">
        <name>FMN</name>
        <dbReference type="ChEBI" id="CHEBI:58210"/>
    </cofactor>
    <text evidence="2 3">Binds 1 FMN non-covalently.</text>
</comment>
<comment type="subunit">
    <text evidence="3">Monomer.</text>
</comment>
<comment type="domain">
    <text evidence="3">The structure is significantly stabilized upon cofactor binding.</text>
</comment>
<comment type="similarity">
    <text evidence="5">Belongs to the flavodoxin family. MioC subfamily.</text>
</comment>
<sequence length="149" mass="16274">MAEIGIFVGTMYGNSLLVAEEAEAILTAQGHKATVFEDPELSDWLPYQDKYVLVVTSTTGQGDLPDSIVPLFQGIKDSLGFQPNLRYGVIALGDSSYVNFCNGGKQFDALLQEQSAQRVGEMLLIDASENPEPETESNPWVEQWGTLLS</sequence>